<comment type="alternative products">
    <event type="alternative splicing"/>
    <isoform>
        <id>Q8IVF1-1</id>
        <name>1</name>
        <sequence type="displayed"/>
    </isoform>
    <isoform>
        <id>Q8IVF1-2</id>
        <name>2</name>
        <sequence type="described" ref="VSP_034018 VSP_034020"/>
    </isoform>
</comment>
<comment type="similarity">
    <text evidence="3">Belongs to the NUT family.</text>
</comment>
<comment type="sequence caution" evidence="3">
    <conflict type="frameshift">
        <sequence resource="EMBL-CDS" id="BAC23116"/>
    </conflict>
</comment>
<gene>
    <name type="primary">NUTM2A</name>
    <name type="synonym">FAM22A</name>
    <name type="synonym">KIAA2020</name>
</gene>
<reference key="1">
    <citation type="submission" date="2002-11" db="EMBL/GenBank/DDBJ databases">
        <title>The nucleotide sequence of a long cDNA clone isolated from human.</title>
        <authorList>
            <person name="Nagase T."/>
            <person name="Kikuno R."/>
            <person name="Ohara O."/>
        </authorList>
    </citation>
    <scope>NUCLEOTIDE SEQUENCE [LARGE SCALE MRNA] (ISOFORM 2)</scope>
    <source>
        <tissue>Brain</tissue>
    </source>
</reference>
<reference key="2">
    <citation type="journal article" date="2004" name="Nature">
        <title>The DNA sequence and comparative analysis of human chromosome 10.</title>
        <authorList>
            <person name="Deloukas P."/>
            <person name="Earthrowl M.E."/>
            <person name="Grafham D.V."/>
            <person name="Rubenfield M."/>
            <person name="French L."/>
            <person name="Steward C.A."/>
            <person name="Sims S.K."/>
            <person name="Jones M.C."/>
            <person name="Searle S."/>
            <person name="Scott C."/>
            <person name="Howe K."/>
            <person name="Hunt S.E."/>
            <person name="Andrews T.D."/>
            <person name="Gilbert J.G.R."/>
            <person name="Swarbreck D."/>
            <person name="Ashurst J.L."/>
            <person name="Taylor A."/>
            <person name="Battles J."/>
            <person name="Bird C.P."/>
            <person name="Ainscough R."/>
            <person name="Almeida J.P."/>
            <person name="Ashwell R.I.S."/>
            <person name="Ambrose K.D."/>
            <person name="Babbage A.K."/>
            <person name="Bagguley C.L."/>
            <person name="Bailey J."/>
            <person name="Banerjee R."/>
            <person name="Bates K."/>
            <person name="Beasley H."/>
            <person name="Bray-Allen S."/>
            <person name="Brown A.J."/>
            <person name="Brown J.Y."/>
            <person name="Burford D.C."/>
            <person name="Burrill W."/>
            <person name="Burton J."/>
            <person name="Cahill P."/>
            <person name="Camire D."/>
            <person name="Carter N.P."/>
            <person name="Chapman J.C."/>
            <person name="Clark S.Y."/>
            <person name="Clarke G."/>
            <person name="Clee C.M."/>
            <person name="Clegg S."/>
            <person name="Corby N."/>
            <person name="Coulson A."/>
            <person name="Dhami P."/>
            <person name="Dutta I."/>
            <person name="Dunn M."/>
            <person name="Faulkner L."/>
            <person name="Frankish A."/>
            <person name="Frankland J.A."/>
            <person name="Garner P."/>
            <person name="Garnett J."/>
            <person name="Gribble S."/>
            <person name="Griffiths C."/>
            <person name="Grocock R."/>
            <person name="Gustafson E."/>
            <person name="Hammond S."/>
            <person name="Harley J.L."/>
            <person name="Hart E."/>
            <person name="Heath P.D."/>
            <person name="Ho T.P."/>
            <person name="Hopkins B."/>
            <person name="Horne J."/>
            <person name="Howden P.J."/>
            <person name="Huckle E."/>
            <person name="Hynds C."/>
            <person name="Johnson C."/>
            <person name="Johnson D."/>
            <person name="Kana A."/>
            <person name="Kay M."/>
            <person name="Kimberley A.M."/>
            <person name="Kershaw J.K."/>
            <person name="Kokkinaki M."/>
            <person name="Laird G.K."/>
            <person name="Lawlor S."/>
            <person name="Lee H.M."/>
            <person name="Leongamornlert D.A."/>
            <person name="Laird G."/>
            <person name="Lloyd C."/>
            <person name="Lloyd D.M."/>
            <person name="Loveland J."/>
            <person name="Lovell J."/>
            <person name="McLaren S."/>
            <person name="McLay K.E."/>
            <person name="McMurray A."/>
            <person name="Mashreghi-Mohammadi M."/>
            <person name="Matthews L."/>
            <person name="Milne S."/>
            <person name="Nickerson T."/>
            <person name="Nguyen M."/>
            <person name="Overton-Larty E."/>
            <person name="Palmer S.A."/>
            <person name="Pearce A.V."/>
            <person name="Peck A.I."/>
            <person name="Pelan S."/>
            <person name="Phillimore B."/>
            <person name="Porter K."/>
            <person name="Rice C.M."/>
            <person name="Rogosin A."/>
            <person name="Ross M.T."/>
            <person name="Sarafidou T."/>
            <person name="Sehra H.K."/>
            <person name="Shownkeen R."/>
            <person name="Skuce C.D."/>
            <person name="Smith M."/>
            <person name="Standring L."/>
            <person name="Sycamore N."/>
            <person name="Tester J."/>
            <person name="Thorpe A."/>
            <person name="Torcasso W."/>
            <person name="Tracey A."/>
            <person name="Tromans A."/>
            <person name="Tsolas J."/>
            <person name="Wall M."/>
            <person name="Walsh J."/>
            <person name="Wang H."/>
            <person name="Weinstock K."/>
            <person name="West A.P."/>
            <person name="Willey D.L."/>
            <person name="Whitehead S.L."/>
            <person name="Wilming L."/>
            <person name="Wray P.W."/>
            <person name="Young L."/>
            <person name="Chen Y."/>
            <person name="Lovering R.C."/>
            <person name="Moschonas N.K."/>
            <person name="Siebert R."/>
            <person name="Fechtel K."/>
            <person name="Bentley D."/>
            <person name="Durbin R.M."/>
            <person name="Hubbard T."/>
            <person name="Doucette-Stamm L."/>
            <person name="Beck S."/>
            <person name="Smith D.R."/>
            <person name="Rogers J."/>
        </authorList>
    </citation>
    <scope>NUCLEOTIDE SEQUENCE [LARGE SCALE GENOMIC DNA]</scope>
</reference>
<accession>Q8IVF1</accession>
<accession>A6NMX5</accession>
<accession>C9JDI1</accession>
<accession>Q5VZW1</accession>
<dbReference type="EMBL" id="AB095940">
    <property type="protein sequence ID" value="BAC23116.1"/>
    <property type="status" value="ALT_FRAME"/>
    <property type="molecule type" value="mRNA"/>
</dbReference>
<dbReference type="EMBL" id="AL157893">
    <property type="status" value="NOT_ANNOTATED_CDS"/>
    <property type="molecule type" value="Genomic_DNA"/>
</dbReference>
<dbReference type="CCDS" id="CCDS44452.1">
    <molecule id="Q8IVF1-1"/>
</dbReference>
<dbReference type="RefSeq" id="NP_001092808.1">
    <molecule id="Q8IVF1-1"/>
    <property type="nucleotide sequence ID" value="NM_001099338.2"/>
</dbReference>
<dbReference type="RefSeq" id="XP_011538424.1">
    <property type="nucleotide sequence ID" value="XM_011540122.2"/>
</dbReference>
<dbReference type="RefSeq" id="XP_016872096.1">
    <property type="nucleotide sequence ID" value="XM_017016607.1"/>
</dbReference>
<dbReference type="SMR" id="Q8IVF1"/>
<dbReference type="BioGRID" id="608554">
    <property type="interactions" value="5"/>
</dbReference>
<dbReference type="IntAct" id="Q8IVF1">
    <property type="interactions" value="1"/>
</dbReference>
<dbReference type="STRING" id="9606.ENSP00000371126"/>
<dbReference type="iPTMnet" id="Q8IVF1"/>
<dbReference type="PhosphoSitePlus" id="Q8IVF1"/>
<dbReference type="BioMuta" id="NUTM2A"/>
<dbReference type="DMDM" id="269849751"/>
<dbReference type="jPOST" id="Q8IVF1"/>
<dbReference type="MassIVE" id="Q8IVF1"/>
<dbReference type="PaxDb" id="9606-ENSP00000371126"/>
<dbReference type="Antibodypedia" id="70852">
    <property type="antibodies" value="9 antibodies from 5 providers"/>
</dbReference>
<dbReference type="DNASU" id="728118"/>
<dbReference type="Ensembl" id="ENST00000381689.4">
    <molecule id="Q8IVF1-2"/>
    <property type="protein sequence ID" value="ENSP00000371107.3"/>
    <property type="gene ID" value="ENSG00000184923.12"/>
</dbReference>
<dbReference type="Ensembl" id="ENST00000381707.6">
    <molecule id="Q8IVF1-1"/>
    <property type="protein sequence ID" value="ENSP00000371126.1"/>
    <property type="gene ID" value="ENSG00000184923.12"/>
</dbReference>
<dbReference type="GeneID" id="728118"/>
<dbReference type="KEGG" id="hsa:728118"/>
<dbReference type="KEGG" id="hsa:728130"/>
<dbReference type="MANE-Select" id="ENST00000381707.6">
    <property type="protein sequence ID" value="ENSP00000371126.1"/>
    <property type="RefSeq nucleotide sequence ID" value="NM_001099338.2"/>
    <property type="RefSeq protein sequence ID" value="NP_001092808.1"/>
</dbReference>
<dbReference type="UCSC" id="uc001kek.4">
    <molecule id="Q8IVF1-1"/>
    <property type="organism name" value="human"/>
</dbReference>
<dbReference type="AGR" id="HGNC:23438"/>
<dbReference type="AGR" id="HGNC:23447"/>
<dbReference type="CTD" id="728118"/>
<dbReference type="CTD" id="728130"/>
<dbReference type="DisGeNET" id="728118"/>
<dbReference type="DisGeNET" id="728130"/>
<dbReference type="GeneCards" id="NUTM2A"/>
<dbReference type="HGNC" id="HGNC:23438">
    <property type="gene designation" value="NUTM2A"/>
</dbReference>
<dbReference type="HPA" id="ENSG00000184923">
    <property type="expression patterns" value="Low tissue specificity"/>
</dbReference>
<dbReference type="MalaCards" id="NUTM2A"/>
<dbReference type="neXtProt" id="NX_Q8IVF1"/>
<dbReference type="OpenTargets" id="ENSG00000184923"/>
<dbReference type="Orphanet" id="213711">
    <property type="disease" value="Endometrial stromal sarcoma"/>
</dbReference>
<dbReference type="PharmGKB" id="PA134875735"/>
<dbReference type="VEuPathDB" id="HostDB:ENSG00000184923"/>
<dbReference type="eggNOG" id="ENOG502RU0F">
    <property type="taxonomic scope" value="Eukaryota"/>
</dbReference>
<dbReference type="GeneTree" id="ENSGT00410000025793"/>
<dbReference type="HOGENOM" id="CLU_021726_0_0_1"/>
<dbReference type="InParanoid" id="Q8IVF1"/>
<dbReference type="OMA" id="GACNIIV"/>
<dbReference type="OrthoDB" id="9536811at2759"/>
<dbReference type="PAN-GO" id="Q8IVF1">
    <property type="GO annotations" value="0 GO annotations based on evolutionary models"/>
</dbReference>
<dbReference type="PhylomeDB" id="Q8IVF1"/>
<dbReference type="TreeFam" id="TF337728"/>
<dbReference type="PathwayCommons" id="Q8IVF1"/>
<dbReference type="SignaLink" id="Q8IVF1"/>
<dbReference type="BioGRID-ORCS" id="728118">
    <property type="hits" value="55 hits in 681 CRISPR screens"/>
</dbReference>
<dbReference type="BioGRID-ORCS" id="728130">
    <property type="hits" value="4 hits in 106 CRISPR screens"/>
</dbReference>
<dbReference type="ChiTaRS" id="NUTM2A">
    <property type="organism name" value="human"/>
</dbReference>
<dbReference type="Pharos" id="Q8IVF1">
    <property type="development level" value="Tdark"/>
</dbReference>
<dbReference type="PRO" id="PR:Q8IVF1"/>
<dbReference type="Proteomes" id="UP000005640">
    <property type="component" value="Chromosome 10"/>
</dbReference>
<dbReference type="RNAct" id="Q8IVF1">
    <property type="molecule type" value="protein"/>
</dbReference>
<dbReference type="Bgee" id="ENSG00000184923">
    <property type="expression patterns" value="Expressed in sural nerve and 95 other cell types or tissues"/>
</dbReference>
<dbReference type="InterPro" id="IPR024310">
    <property type="entry name" value="NUT"/>
</dbReference>
<dbReference type="InterPro" id="IPR024309">
    <property type="entry name" value="NUT_N"/>
</dbReference>
<dbReference type="PANTHER" id="PTHR22879">
    <property type="entry name" value="NUT FAMILY MEMBER 1"/>
    <property type="match status" value="1"/>
</dbReference>
<dbReference type="PANTHER" id="PTHR22879:SF14">
    <property type="entry name" value="NUT FAMILY MEMBER 2A-RELATED"/>
    <property type="match status" value="1"/>
</dbReference>
<dbReference type="Pfam" id="PF12881">
    <property type="entry name" value="NUT"/>
    <property type="match status" value="1"/>
</dbReference>
<evidence type="ECO:0000256" key="1">
    <source>
        <dbReference type="SAM" id="MobiDB-lite"/>
    </source>
</evidence>
<evidence type="ECO:0000303" key="2">
    <source ref="1"/>
</evidence>
<evidence type="ECO:0000305" key="3"/>
<proteinExistence type="evidence at transcript level"/>
<sequence>MEVKGPSGRSFCCESEGQFKSCLKRHTPSLLLPSSWKGNSGSCLMAKALHRMSPTPNSCPLPLPLCRMSGVLCSRNLFTFKFSLFQLDSGASGEPGHSLGLTLGFSHCGNCQTAVVSAQPEGMASNGAYPALGPGVTANPGTSLSVFTALPFTTPAPGPAHGPLLVTAGAPPGGPLVLSTLPSTPLVTEQDGCGPSGAGASNVFVQMRTEVGPVKAAQAQTLVLTQAPLVWQAPGALCGGVVCPPPLLLAAAPVVPVMAAQVVGGTQACEGGWSQGLPLPPPPPPAAQLPPIVSQGNAGPWPQGAHGEGSLASSQAKAPPDDSCNPRSVYENFRLWQHYKPLARRHLPQSPDTEALSCFLIPVLRSLARRKPTMTLEEGLWRAMREWQHTSNFDRMIFYEMAEKFLEFEAEEEMQIQKSQWMKGPQCLPPPATPRLEPRGPPAPEVVKQPVYLPSKAGPKAPTACLPPPRPQRPVTKARRPPPRPHRRAETKARLPPPRPQRPAETKVPEEIPPEVVQEYVDIMEELLGPSLGATGEPEKQREEGEVKQPQEEDWTPPDPGLLSYTDKLCSQKDFVTKVEAVIHPQFLEELLSPDPQMDFLALSQELEQEEGLTLAQLVEKRLLPLKEKQHARAAPSRGTARLDSSSSKFAAGQGAERDVPVPQQGVGMETCPPQTTARDSQGRGRAHTGMARSKDSVVLLGCQDSPGLRAARPTSPPQDHRPTCPGVGTKDALDLPGGSPVRESHGLAQGSSEEEELPSLAFLLGSQHKLLPWWLPQSPVPASGLLSPEKWGPQGTHQFPSAERRGLNLAPSPANKAKKRPLFGSLSPAEKTPHPGPGLRVSGEQSLTWGLGGPSQSQKRKGDPLVSRKEKKQRCSQ</sequence>
<keyword id="KW-0025">Alternative splicing</keyword>
<keyword id="KW-1185">Reference proteome</keyword>
<feature type="chain" id="PRO_0000266032" description="NUT family member 2A">
    <location>
        <begin position="1"/>
        <end position="878"/>
    </location>
</feature>
<feature type="region of interest" description="Disordered" evidence="1">
    <location>
        <begin position="273"/>
        <end position="324"/>
    </location>
</feature>
<feature type="region of interest" description="Disordered" evidence="1">
    <location>
        <begin position="417"/>
        <end position="566"/>
    </location>
</feature>
<feature type="region of interest" description="Disordered" evidence="1">
    <location>
        <begin position="627"/>
        <end position="757"/>
    </location>
</feature>
<feature type="region of interest" description="Disordered" evidence="1">
    <location>
        <begin position="775"/>
        <end position="878"/>
    </location>
</feature>
<feature type="compositionally biased region" description="Pro residues" evidence="1">
    <location>
        <begin position="278"/>
        <end position="288"/>
    </location>
</feature>
<feature type="compositionally biased region" description="Pro residues" evidence="1">
    <location>
        <begin position="427"/>
        <end position="444"/>
    </location>
</feature>
<feature type="compositionally biased region" description="Basic residues" evidence="1">
    <location>
        <begin position="476"/>
        <end position="487"/>
    </location>
</feature>
<feature type="compositionally biased region" description="Basic and acidic residues" evidence="1">
    <location>
        <begin position="537"/>
        <end position="551"/>
    </location>
</feature>
<feature type="splice variant" id="VSP_034018" description="In isoform 2." evidence="2">
    <original>LVEKRLLPLKEK</original>
    <variation>GAPSDAPGTDRC</variation>
    <location>
        <begin position="618"/>
        <end position="629"/>
    </location>
</feature>
<feature type="splice variant" id="VSP_034020" description="In isoform 2." evidence="2">
    <location>
        <begin position="630"/>
        <end position="878"/>
    </location>
</feature>
<feature type="sequence conflict" description="In Ref. 1; BAC23116." evidence="3" ref="1">
    <original>K</original>
    <variation>E</variation>
    <location>
        <position position="47"/>
    </location>
</feature>
<feature type="sequence conflict" description="In Ref. 1; BAC23116." evidence="3" ref="1">
    <original>A</original>
    <variation>T</variation>
    <location>
        <position position="160"/>
    </location>
</feature>
<feature type="sequence conflict" description="In Ref. 1; BAC23116." evidence="3" ref="1">
    <original>E</original>
    <variation>K</variation>
    <location>
        <position position="546"/>
    </location>
</feature>
<organism>
    <name type="scientific">Homo sapiens</name>
    <name type="common">Human</name>
    <dbReference type="NCBI Taxonomy" id="9606"/>
    <lineage>
        <taxon>Eukaryota</taxon>
        <taxon>Metazoa</taxon>
        <taxon>Chordata</taxon>
        <taxon>Craniata</taxon>
        <taxon>Vertebrata</taxon>
        <taxon>Euteleostomi</taxon>
        <taxon>Mammalia</taxon>
        <taxon>Eutheria</taxon>
        <taxon>Euarchontoglires</taxon>
        <taxon>Primates</taxon>
        <taxon>Haplorrhini</taxon>
        <taxon>Catarrhini</taxon>
        <taxon>Hominidae</taxon>
        <taxon>Homo</taxon>
    </lineage>
</organism>
<protein>
    <recommendedName>
        <fullName>NUT family member 2A</fullName>
    </recommendedName>
</protein>
<name>NTM2A_HUMAN</name>